<protein>
    <recommendedName>
        <fullName evidence="2">Outer capsid glycoprotein VP7</fullName>
    </recommendedName>
</protein>
<evidence type="ECO:0000255" key="1"/>
<evidence type="ECO:0000255" key="2">
    <source>
        <dbReference type="HAMAP-Rule" id="MF_04131"/>
    </source>
</evidence>
<evidence type="ECO:0000305" key="3"/>
<accession>P32545</accession>
<name>VP7_ROTP2</name>
<keyword id="KW-0024">Alternative initiation</keyword>
<keyword id="KW-0106">Calcium</keyword>
<keyword id="KW-0167">Capsid protein</keyword>
<keyword id="KW-1015">Disulfide bond</keyword>
<keyword id="KW-0325">Glycoprotein</keyword>
<keyword id="KW-1038">Host endoplasmic reticulum</keyword>
<keyword id="KW-0945">Host-virus interaction</keyword>
<keyword id="KW-0479">Metal-binding</keyword>
<keyword id="KW-1152">Outer capsid protein</keyword>
<keyword id="KW-0732">Signal</keyword>
<keyword id="KW-1146">T=13 icosahedral capsid protein</keyword>
<keyword id="KW-0946">Virion</keyword>
<proteinExistence type="inferred from homology"/>
<sequence>MYGIEYTTVLTFLISVILLNYILKSLTRIMDFIIYRFLFVIVILSPFLNAQNYGINLPITGSMDTPYINSTQEEMFLTSTLCLYYPTEADTEISDNSWKDTLSQLFLTKGWPTGSVYFKDYTDIASFSVDPQLYCDYNLVMMKYDAALQLDMSELADLILNEWLCNPMDITLYYYQQTDEANKWISMGSSCTIKVCPLNTQTLGIGCLTTDTNTFEEVATAEKLAITDVVDGVNHKLSVTTNTCTIRNCKKLGPRENVAVIQVGGSDILDITADPTTAPQTERMMRVNWKKWWQVFYTIVDYVNQIVQVMSKRSRSLNSAAFYYRV</sequence>
<dbReference type="SMR" id="P32545"/>
<dbReference type="GO" id="GO:0044166">
    <property type="term" value="C:host cell endoplasmic reticulum lumen"/>
    <property type="evidence" value="ECO:0007669"/>
    <property type="project" value="UniProtKB-SubCell"/>
</dbReference>
<dbReference type="GO" id="GO:0039621">
    <property type="term" value="C:T=13 icosahedral viral capsid"/>
    <property type="evidence" value="ECO:0007669"/>
    <property type="project" value="UniProtKB-UniRule"/>
</dbReference>
<dbReference type="GO" id="GO:0039624">
    <property type="term" value="C:viral outer capsid"/>
    <property type="evidence" value="ECO:0007669"/>
    <property type="project" value="UniProtKB-UniRule"/>
</dbReference>
<dbReference type="GO" id="GO:0046872">
    <property type="term" value="F:metal ion binding"/>
    <property type="evidence" value="ECO:0007669"/>
    <property type="project" value="UniProtKB-KW"/>
</dbReference>
<dbReference type="FunFam" id="2.60.120.800:FF:000001">
    <property type="entry name" value="Outer capsid glycoprotein VP7"/>
    <property type="match status" value="1"/>
</dbReference>
<dbReference type="Gene3D" id="3.40.50.11130">
    <property type="entry name" value="Glycoprotein VP7, domain 1"/>
    <property type="match status" value="1"/>
</dbReference>
<dbReference type="Gene3D" id="2.60.120.800">
    <property type="entry name" value="Rotavirus outer-layer protein VP7, domain 2"/>
    <property type="match status" value="1"/>
</dbReference>
<dbReference type="HAMAP" id="MF_04130">
    <property type="entry name" value="Rota_VP7"/>
    <property type="match status" value="1"/>
</dbReference>
<dbReference type="HAMAP" id="MF_04131">
    <property type="entry name" value="Rota_VP7_A"/>
    <property type="match status" value="1"/>
</dbReference>
<dbReference type="InterPro" id="IPR001963">
    <property type="entry name" value="VP7"/>
</dbReference>
<dbReference type="InterPro" id="IPR042207">
    <property type="entry name" value="VP7_1"/>
</dbReference>
<dbReference type="InterPro" id="IPR042210">
    <property type="entry name" value="VP7_2"/>
</dbReference>
<dbReference type="Pfam" id="PF00434">
    <property type="entry name" value="VP7"/>
    <property type="match status" value="1"/>
</dbReference>
<reference key="1">
    <citation type="journal article" date="1989" name="Arch. Virol.">
        <title>Comparative sequence analysis of VP7 genes from five Australian porcine rotaviruses.</title>
        <authorList>
            <person name="Huang J.A."/>
            <person name="Nagesha H.S."/>
            <person name="Dyall-Smith M.L."/>
            <person name="Holmes I.H."/>
        </authorList>
    </citation>
    <scope>NUCLEOTIDE SEQUENCE</scope>
</reference>
<feature type="signal peptide" evidence="2">
    <location>
        <begin position="1"/>
        <end position="50"/>
    </location>
</feature>
<feature type="chain" id="PRO_0000149611" description="Outer capsid glycoprotein VP7" evidence="2">
    <location>
        <begin position="51"/>
        <end position="326"/>
    </location>
</feature>
<feature type="region of interest" description="CNP motif; interaction with ITGAV/ITGB3" evidence="2">
    <location>
        <begin position="165"/>
        <end position="167"/>
    </location>
</feature>
<feature type="region of interest" description="GPR motif; interaction with ITGAX/ITGB2" evidence="2">
    <location>
        <begin position="253"/>
        <end position="255"/>
    </location>
</feature>
<feature type="binding site" evidence="2">
    <location>
        <position position="95"/>
    </location>
    <ligand>
        <name>Ca(2+)</name>
        <dbReference type="ChEBI" id="CHEBI:29108"/>
        <label>1</label>
    </ligand>
</feature>
<feature type="binding site" evidence="2">
    <location>
        <position position="177"/>
    </location>
    <ligand>
        <name>Ca(2+)</name>
        <dbReference type="ChEBI" id="CHEBI:29108"/>
        <label>2</label>
    </ligand>
</feature>
<feature type="binding site" evidence="2">
    <location>
        <position position="206"/>
    </location>
    <ligand>
        <name>Ca(2+)</name>
        <dbReference type="ChEBI" id="CHEBI:29108"/>
        <label>1</label>
    </ligand>
</feature>
<feature type="binding site" evidence="2">
    <location>
        <position position="214"/>
    </location>
    <ligand>
        <name>Ca(2+)</name>
        <dbReference type="ChEBI" id="CHEBI:29108"/>
        <label>1</label>
    </ligand>
</feature>
<feature type="binding site" evidence="2">
    <location>
        <position position="216"/>
    </location>
    <ligand>
        <name>Ca(2+)</name>
        <dbReference type="ChEBI" id="CHEBI:29108"/>
        <label>1</label>
    </ligand>
</feature>
<feature type="binding site" evidence="2">
    <location>
        <position position="228"/>
    </location>
    <ligand>
        <name>Ca(2+)</name>
        <dbReference type="ChEBI" id="CHEBI:29108"/>
        <label>2</label>
    </ligand>
</feature>
<feature type="binding site" evidence="2">
    <location>
        <position position="229"/>
    </location>
    <ligand>
        <name>Ca(2+)</name>
        <dbReference type="ChEBI" id="CHEBI:29108"/>
        <label>2</label>
    </ligand>
</feature>
<feature type="binding site" evidence="2">
    <location>
        <position position="231"/>
    </location>
    <ligand>
        <name>Ca(2+)</name>
        <dbReference type="ChEBI" id="CHEBI:29108"/>
        <label>2</label>
    </ligand>
</feature>
<feature type="binding site" evidence="2">
    <location>
        <position position="301"/>
    </location>
    <ligand>
        <name>Ca(2+)</name>
        <dbReference type="ChEBI" id="CHEBI:29108"/>
        <label>2</label>
    </ligand>
</feature>
<feature type="glycosylation site" description="N-linked (GlcNAc...) asparagine; by host" evidence="1">
    <location>
        <position position="69"/>
    </location>
</feature>
<feature type="disulfide bond" evidence="2">
    <location>
        <begin position="82"/>
        <end position="135"/>
    </location>
</feature>
<feature type="disulfide bond" evidence="2">
    <location>
        <begin position="165"/>
        <end position="249"/>
    </location>
</feature>
<feature type="disulfide bond" evidence="2">
    <location>
        <begin position="191"/>
        <end position="244"/>
    </location>
</feature>
<feature type="disulfide bond" evidence="2">
    <location>
        <begin position="196"/>
        <end position="207"/>
    </location>
</feature>
<feature type="splice variant" id="VSP_038604" description="In isoform 2." evidence="3">
    <location>
        <begin position="1"/>
        <end position="29"/>
    </location>
</feature>
<organismHost>
    <name type="scientific">Sus scrofa</name>
    <name type="common">Pig</name>
    <dbReference type="NCBI Taxonomy" id="9823"/>
</organismHost>
<comment type="function">
    <text evidence="2">Calcium-binding protein that interacts with rotavirus cell receptors once the initial attachment by VP4 has been achieved. Rotavirus attachment and entry into the host cell probably involves multiple sequential contacts between the outer capsid proteins VP4 and VP7, and the cell receptors. Following entry into the host cell, low intracellular or intravesicular Ca(2+) concentration probably causes the calcium-stabilized VP7 trimers to dissociate from the virion. This step is probably necessary for the membrane-disrupting entry step and the release of VP4, which is locked onto the virion by VP7.</text>
</comment>
<comment type="subunit">
    <text evidence="2">Homotrimer; disulfide-linked. 2 Ca(2+) ions bound at each subunit interface in the trimer hold the trimer together. Interacts with the intermediate capsid protein VP6. Interacts with the outer capsid protein VP5*.</text>
</comment>
<comment type="subcellular location">
    <subcellularLocation>
        <location evidence="2">Virion</location>
    </subcellularLocation>
    <subcellularLocation>
        <location evidence="2">Host endoplasmic reticulum lumen</location>
    </subcellularLocation>
    <text evidence="2">The outer layer contains 780 copies of VP7, grouped as 260 trimers. Immature double-layered particles assembled in the cytoplasm bud across the membrane of the endoplasmic reticulum, acquiring during this process a transient lipid membrane that is modified with the ER resident viral glycoproteins NSP4 and VP7; these enveloped particles also contain VP4. As the particles move towards the interior of the ER cisternae, the transient lipid membrane and the non-structural protein NSP4 are lost, while the virus surface proteins VP4 and VP7 rearrange to form the outermost virus protein layer, yielding mature infectious triple-layered particles.</text>
</comment>
<comment type="alternative products">
    <event type="alternative initiation"/>
    <isoform>
        <id>P32545-1</id>
        <name>1</name>
        <sequence type="displayed"/>
    </isoform>
    <isoform>
        <id>P32545-2</id>
        <name>2</name>
        <sequence type="described" ref="VSP_038604"/>
    </isoform>
</comment>
<comment type="PTM">
    <text evidence="2">N-glycosylated.</text>
</comment>
<comment type="PTM">
    <text evidence="2">The N-terminus is blocked possibly by pyroglutamic acid.</text>
</comment>
<comment type="miscellaneous">
    <text evidence="2">Some rotavirus strains are neuraminidase-sensitive and require sialic acid to attach to the cell surface. Some rotavirus strains are integrin-dependent. Some rotavirus strains depend on ganglioside for their entry into the host cell. Hsp70 also seems to be involved in the entry of some strains.</text>
</comment>
<comment type="miscellaneous">
    <text evidence="2">In group A rotaviruses, VP7 defines the G serotype.</text>
</comment>
<comment type="miscellaneous">
    <molecule>Isoform 2</molecule>
    <text evidence="3">Produced by alternative initiation at Met-30 of isoform 1.</text>
</comment>
<comment type="similarity">
    <text evidence="2">Belongs to the rotavirus VP7 family.</text>
</comment>
<organism>
    <name type="scientific">Rotavirus A (isolate RVA/Pig/Australia/AT/1976/G3P9[7])</name>
    <name type="common">RV-A</name>
    <name type="synonym">Rotavirus A (isolate AT/76)</name>
    <dbReference type="NCBI Taxonomy" id="31577"/>
    <lineage>
        <taxon>Viruses</taxon>
        <taxon>Riboviria</taxon>
        <taxon>Orthornavirae</taxon>
        <taxon>Duplornaviricota</taxon>
        <taxon>Resentoviricetes</taxon>
        <taxon>Reovirales</taxon>
        <taxon>Sedoreoviridae</taxon>
        <taxon>Rotavirus</taxon>
        <taxon>Rotavirus A</taxon>
    </lineage>
</organism>